<feature type="chain" id="PRO_0000327741" description="Dynactin subunit 6">
    <location>
        <begin position="1"/>
        <end position="189"/>
    </location>
</feature>
<accession>Q54FM4</accession>
<proteinExistence type="inferred from homology"/>
<organism>
    <name type="scientific">Dictyostelium discoideum</name>
    <name type="common">Social amoeba</name>
    <dbReference type="NCBI Taxonomy" id="44689"/>
    <lineage>
        <taxon>Eukaryota</taxon>
        <taxon>Amoebozoa</taxon>
        <taxon>Evosea</taxon>
        <taxon>Eumycetozoa</taxon>
        <taxon>Dictyostelia</taxon>
        <taxon>Dictyosteliales</taxon>
        <taxon>Dictyosteliaceae</taxon>
        <taxon>Dictyostelium</taxon>
    </lineage>
</organism>
<protein>
    <recommendedName>
        <fullName>Dynactin subunit 6</fullName>
    </recommendedName>
</protein>
<name>DCTN6_DICDI</name>
<comment type="function">
    <text evidence="2">Part of the dynactin complex that activates the molecular motor dynein for ultra-processive transport along microtubules.</text>
</comment>
<comment type="subunit">
    <text evidence="2">Subunit of dynactin, a multiprotein complex part of a tripartite complex with dynein and a adapter, such as BICDL1, BICD2 or HOOK3. The dynactin complex is built around ACTR1A/ACTB filament and consists of an actin-related filament composed of a shoulder domain, a pointed end and a barbed end.</text>
</comment>
<comment type="subcellular location">
    <subcellularLocation>
        <location evidence="1">Cytoplasm</location>
        <location evidence="1">Cytoskeleton</location>
    </subcellularLocation>
</comment>
<comment type="similarity">
    <text evidence="3">Belongs to the dynactin subunits 5/6 family. Dynactin subunit 6 subfamily.</text>
</comment>
<reference key="1">
    <citation type="journal article" date="2005" name="Nature">
        <title>The genome of the social amoeba Dictyostelium discoideum.</title>
        <authorList>
            <person name="Eichinger L."/>
            <person name="Pachebat J.A."/>
            <person name="Gloeckner G."/>
            <person name="Rajandream M.A."/>
            <person name="Sucgang R."/>
            <person name="Berriman M."/>
            <person name="Song J."/>
            <person name="Olsen R."/>
            <person name="Szafranski K."/>
            <person name="Xu Q."/>
            <person name="Tunggal B."/>
            <person name="Kummerfeld S."/>
            <person name="Madera M."/>
            <person name="Konfortov B.A."/>
            <person name="Rivero F."/>
            <person name="Bankier A.T."/>
            <person name="Lehmann R."/>
            <person name="Hamlin N."/>
            <person name="Davies R."/>
            <person name="Gaudet P."/>
            <person name="Fey P."/>
            <person name="Pilcher K."/>
            <person name="Chen G."/>
            <person name="Saunders D."/>
            <person name="Sodergren E.J."/>
            <person name="Davis P."/>
            <person name="Kerhornou A."/>
            <person name="Nie X."/>
            <person name="Hall N."/>
            <person name="Anjard C."/>
            <person name="Hemphill L."/>
            <person name="Bason N."/>
            <person name="Farbrother P."/>
            <person name="Desany B."/>
            <person name="Just E."/>
            <person name="Morio T."/>
            <person name="Rost R."/>
            <person name="Churcher C.M."/>
            <person name="Cooper J."/>
            <person name="Haydock S."/>
            <person name="van Driessche N."/>
            <person name="Cronin A."/>
            <person name="Goodhead I."/>
            <person name="Muzny D.M."/>
            <person name="Mourier T."/>
            <person name="Pain A."/>
            <person name="Lu M."/>
            <person name="Harper D."/>
            <person name="Lindsay R."/>
            <person name="Hauser H."/>
            <person name="James K.D."/>
            <person name="Quiles M."/>
            <person name="Madan Babu M."/>
            <person name="Saito T."/>
            <person name="Buchrieser C."/>
            <person name="Wardroper A."/>
            <person name="Felder M."/>
            <person name="Thangavelu M."/>
            <person name="Johnson D."/>
            <person name="Knights A."/>
            <person name="Loulseged H."/>
            <person name="Mungall K.L."/>
            <person name="Oliver K."/>
            <person name="Price C."/>
            <person name="Quail M.A."/>
            <person name="Urushihara H."/>
            <person name="Hernandez J."/>
            <person name="Rabbinowitsch E."/>
            <person name="Steffen D."/>
            <person name="Sanders M."/>
            <person name="Ma J."/>
            <person name="Kohara Y."/>
            <person name="Sharp S."/>
            <person name="Simmonds M.N."/>
            <person name="Spiegler S."/>
            <person name="Tivey A."/>
            <person name="Sugano S."/>
            <person name="White B."/>
            <person name="Walker D."/>
            <person name="Woodward J.R."/>
            <person name="Winckler T."/>
            <person name="Tanaka Y."/>
            <person name="Shaulsky G."/>
            <person name="Schleicher M."/>
            <person name="Weinstock G.M."/>
            <person name="Rosenthal A."/>
            <person name="Cox E.C."/>
            <person name="Chisholm R.L."/>
            <person name="Gibbs R.A."/>
            <person name="Loomis W.F."/>
            <person name="Platzer M."/>
            <person name="Kay R.R."/>
            <person name="Williams J.G."/>
            <person name="Dear P.H."/>
            <person name="Noegel A.A."/>
            <person name="Barrell B.G."/>
            <person name="Kuspa A."/>
        </authorList>
    </citation>
    <scope>NUCLEOTIDE SEQUENCE [LARGE SCALE GENOMIC DNA]</scope>
    <source>
        <strain>AX4</strain>
    </source>
</reference>
<evidence type="ECO:0000250" key="1"/>
<evidence type="ECO:0000250" key="2">
    <source>
        <dbReference type="UniProtKB" id="O00399"/>
    </source>
</evidence>
<evidence type="ECO:0000305" key="3"/>
<keyword id="KW-0963">Cytoplasm</keyword>
<keyword id="KW-0206">Cytoskeleton</keyword>
<keyword id="KW-1185">Reference proteome</keyword>
<sequence>MSTAPSPTITSPTQTSPVVINKSLICQDSTVSNGVQIAIGTVLHPRSSIIISEGAGPIIIGENNIIEELVQIVNKSPEPMIIGSNNLFEVGSYIECKSIGNGNVFEPKCKILKNTIIKDQCSIGAGCIVSEDKICENNTIIAQTQNSQIQTTSTLPYDHHSSIHMTHLELLHKSIPLFHTIKKTPILEK</sequence>
<dbReference type="EMBL" id="AAFI02000170">
    <property type="protein sequence ID" value="EAL62063.1"/>
    <property type="molecule type" value="Genomic_DNA"/>
</dbReference>
<dbReference type="RefSeq" id="XP_635567.1">
    <property type="nucleotide sequence ID" value="XM_630475.1"/>
</dbReference>
<dbReference type="SMR" id="Q54FM4"/>
<dbReference type="FunCoup" id="Q54FM4">
    <property type="interactions" value="18"/>
</dbReference>
<dbReference type="STRING" id="44689.Q54FM4"/>
<dbReference type="PaxDb" id="44689-DDB0233815"/>
<dbReference type="EnsemblProtists" id="EAL62063">
    <property type="protein sequence ID" value="EAL62063"/>
    <property type="gene ID" value="DDB_G0290757"/>
</dbReference>
<dbReference type="GeneID" id="8627813"/>
<dbReference type="KEGG" id="ddi:DDB_G0290757"/>
<dbReference type="dictyBase" id="DDB_G0290757">
    <property type="gene designation" value="dynF"/>
</dbReference>
<dbReference type="VEuPathDB" id="AmoebaDB:DDB_G0290757"/>
<dbReference type="eggNOG" id="KOG4042">
    <property type="taxonomic scope" value="Eukaryota"/>
</dbReference>
<dbReference type="HOGENOM" id="CLU_085418_0_0_1"/>
<dbReference type="InParanoid" id="Q54FM4"/>
<dbReference type="OMA" id="RCQVGPN"/>
<dbReference type="PhylomeDB" id="Q54FM4"/>
<dbReference type="Reactome" id="R-DDI-6807878">
    <property type="pathway name" value="COPI-mediated anterograde transport"/>
</dbReference>
<dbReference type="PRO" id="PR:Q54FM4"/>
<dbReference type="Proteomes" id="UP000002195">
    <property type="component" value="Chromosome 5"/>
</dbReference>
<dbReference type="GO" id="GO:0005737">
    <property type="term" value="C:cytoplasm"/>
    <property type="evidence" value="ECO:0007669"/>
    <property type="project" value="UniProtKB-KW"/>
</dbReference>
<dbReference type="GO" id="GO:0005869">
    <property type="term" value="C:dynactin complex"/>
    <property type="evidence" value="ECO:0000318"/>
    <property type="project" value="GO_Central"/>
</dbReference>
<dbReference type="GO" id="GO:0070840">
    <property type="term" value="F:dynein complex binding"/>
    <property type="evidence" value="ECO:0000318"/>
    <property type="project" value="GO_Central"/>
</dbReference>
<dbReference type="GO" id="GO:0007052">
    <property type="term" value="P:mitotic spindle organization"/>
    <property type="evidence" value="ECO:0000318"/>
    <property type="project" value="GO_Central"/>
</dbReference>
<dbReference type="CDD" id="cd04646">
    <property type="entry name" value="LbH_Dynactin_6"/>
    <property type="match status" value="1"/>
</dbReference>
<dbReference type="Gene3D" id="2.160.10.10">
    <property type="entry name" value="Hexapeptide repeat proteins"/>
    <property type="match status" value="1"/>
</dbReference>
<dbReference type="InterPro" id="IPR027777">
    <property type="entry name" value="DCTN6"/>
</dbReference>
<dbReference type="InterPro" id="IPR011004">
    <property type="entry name" value="Trimer_LpxA-like_sf"/>
</dbReference>
<dbReference type="PANTHER" id="PTHR13072">
    <property type="entry name" value="DYNACTIN 6"/>
    <property type="match status" value="1"/>
</dbReference>
<dbReference type="PANTHER" id="PTHR13072:SF0">
    <property type="entry name" value="DYNACTIN SUBUNIT 6"/>
    <property type="match status" value="1"/>
</dbReference>
<dbReference type="SUPFAM" id="SSF51161">
    <property type="entry name" value="Trimeric LpxA-like enzymes"/>
    <property type="match status" value="1"/>
</dbReference>
<gene>
    <name type="primary">dynF</name>
    <name type="synonym">dctn6</name>
    <name type="ORF">DDB_G0290757</name>
</gene>